<name>DUT_TOLAT</name>
<comment type="function">
    <text evidence="1">This enzyme is involved in nucleotide metabolism: it produces dUMP, the immediate precursor of thymidine nucleotides and it decreases the intracellular concentration of dUTP so that uracil cannot be incorporated into DNA.</text>
</comment>
<comment type="catalytic activity">
    <reaction evidence="1">
        <text>dUTP + H2O = dUMP + diphosphate + H(+)</text>
        <dbReference type="Rhea" id="RHEA:10248"/>
        <dbReference type="ChEBI" id="CHEBI:15377"/>
        <dbReference type="ChEBI" id="CHEBI:15378"/>
        <dbReference type="ChEBI" id="CHEBI:33019"/>
        <dbReference type="ChEBI" id="CHEBI:61555"/>
        <dbReference type="ChEBI" id="CHEBI:246422"/>
        <dbReference type="EC" id="3.6.1.23"/>
    </reaction>
</comment>
<comment type="cofactor">
    <cofactor evidence="1">
        <name>Mg(2+)</name>
        <dbReference type="ChEBI" id="CHEBI:18420"/>
    </cofactor>
</comment>
<comment type="pathway">
    <text evidence="1">Pyrimidine metabolism; dUMP biosynthesis; dUMP from dCTP (dUTP route): step 2/2.</text>
</comment>
<comment type="similarity">
    <text evidence="1">Belongs to the dUTPase family.</text>
</comment>
<reference key="1">
    <citation type="submission" date="2009-05" db="EMBL/GenBank/DDBJ databases">
        <title>Complete sequence of Tolumonas auensis DSM 9187.</title>
        <authorList>
            <consortium name="US DOE Joint Genome Institute"/>
            <person name="Lucas S."/>
            <person name="Copeland A."/>
            <person name="Lapidus A."/>
            <person name="Glavina del Rio T."/>
            <person name="Tice H."/>
            <person name="Bruce D."/>
            <person name="Goodwin L."/>
            <person name="Pitluck S."/>
            <person name="Chertkov O."/>
            <person name="Brettin T."/>
            <person name="Detter J.C."/>
            <person name="Han C."/>
            <person name="Larimer F."/>
            <person name="Land M."/>
            <person name="Hauser L."/>
            <person name="Kyrpides N."/>
            <person name="Mikhailova N."/>
            <person name="Spring S."/>
            <person name="Beller H."/>
        </authorList>
    </citation>
    <scope>NUCLEOTIDE SEQUENCE [LARGE SCALE GENOMIC DNA]</scope>
    <source>
        <strain>DSM 9187 / NBRC 110442 / TA 4</strain>
    </source>
</reference>
<accession>C4L816</accession>
<feature type="chain" id="PRO_1000202991" description="Deoxyuridine 5'-triphosphate nucleotidohydrolase">
    <location>
        <begin position="1"/>
        <end position="151"/>
    </location>
</feature>
<feature type="binding site" evidence="1">
    <location>
        <begin position="70"/>
        <end position="72"/>
    </location>
    <ligand>
        <name>substrate</name>
    </ligand>
</feature>
<feature type="binding site" evidence="1">
    <location>
        <position position="83"/>
    </location>
    <ligand>
        <name>substrate</name>
    </ligand>
</feature>
<feature type="binding site" evidence="1">
    <location>
        <begin position="87"/>
        <end position="89"/>
    </location>
    <ligand>
        <name>substrate</name>
    </ligand>
</feature>
<feature type="binding site" evidence="1">
    <location>
        <position position="97"/>
    </location>
    <ligand>
        <name>substrate</name>
    </ligand>
</feature>
<dbReference type="EC" id="3.6.1.23" evidence="1"/>
<dbReference type="EMBL" id="CP001616">
    <property type="protein sequence ID" value="ACQ91815.1"/>
    <property type="molecule type" value="Genomic_DNA"/>
</dbReference>
<dbReference type="RefSeq" id="WP_012728414.1">
    <property type="nucleotide sequence ID" value="NC_012691.1"/>
</dbReference>
<dbReference type="SMR" id="C4L816"/>
<dbReference type="STRING" id="595494.Tola_0185"/>
<dbReference type="KEGG" id="tau:Tola_0185"/>
<dbReference type="eggNOG" id="COG0756">
    <property type="taxonomic scope" value="Bacteria"/>
</dbReference>
<dbReference type="HOGENOM" id="CLU_068508_1_1_6"/>
<dbReference type="OrthoDB" id="9809956at2"/>
<dbReference type="UniPathway" id="UPA00610">
    <property type="reaction ID" value="UER00666"/>
</dbReference>
<dbReference type="Proteomes" id="UP000009073">
    <property type="component" value="Chromosome"/>
</dbReference>
<dbReference type="GO" id="GO:0004170">
    <property type="term" value="F:dUTP diphosphatase activity"/>
    <property type="evidence" value="ECO:0007669"/>
    <property type="project" value="UniProtKB-UniRule"/>
</dbReference>
<dbReference type="GO" id="GO:0000287">
    <property type="term" value="F:magnesium ion binding"/>
    <property type="evidence" value="ECO:0007669"/>
    <property type="project" value="UniProtKB-UniRule"/>
</dbReference>
<dbReference type="GO" id="GO:0006226">
    <property type="term" value="P:dUMP biosynthetic process"/>
    <property type="evidence" value="ECO:0007669"/>
    <property type="project" value="UniProtKB-UniRule"/>
</dbReference>
<dbReference type="GO" id="GO:0046081">
    <property type="term" value="P:dUTP catabolic process"/>
    <property type="evidence" value="ECO:0007669"/>
    <property type="project" value="InterPro"/>
</dbReference>
<dbReference type="CDD" id="cd07557">
    <property type="entry name" value="trimeric_dUTPase"/>
    <property type="match status" value="1"/>
</dbReference>
<dbReference type="FunFam" id="2.70.40.10:FF:000002">
    <property type="entry name" value="dUTP diphosphatase"/>
    <property type="match status" value="1"/>
</dbReference>
<dbReference type="Gene3D" id="2.70.40.10">
    <property type="match status" value="1"/>
</dbReference>
<dbReference type="HAMAP" id="MF_00116">
    <property type="entry name" value="dUTPase_bact"/>
    <property type="match status" value="1"/>
</dbReference>
<dbReference type="InterPro" id="IPR008181">
    <property type="entry name" value="dUTPase"/>
</dbReference>
<dbReference type="InterPro" id="IPR029054">
    <property type="entry name" value="dUTPase-like"/>
</dbReference>
<dbReference type="InterPro" id="IPR036157">
    <property type="entry name" value="dUTPase-like_sf"/>
</dbReference>
<dbReference type="InterPro" id="IPR033704">
    <property type="entry name" value="dUTPase_trimeric"/>
</dbReference>
<dbReference type="NCBIfam" id="TIGR00576">
    <property type="entry name" value="dut"/>
    <property type="match status" value="1"/>
</dbReference>
<dbReference type="NCBIfam" id="NF001862">
    <property type="entry name" value="PRK00601.1"/>
    <property type="match status" value="1"/>
</dbReference>
<dbReference type="PANTHER" id="PTHR11241">
    <property type="entry name" value="DEOXYURIDINE 5'-TRIPHOSPHATE NUCLEOTIDOHYDROLASE"/>
    <property type="match status" value="1"/>
</dbReference>
<dbReference type="PANTHER" id="PTHR11241:SF0">
    <property type="entry name" value="DEOXYURIDINE 5'-TRIPHOSPHATE NUCLEOTIDOHYDROLASE"/>
    <property type="match status" value="1"/>
</dbReference>
<dbReference type="Pfam" id="PF00692">
    <property type="entry name" value="dUTPase"/>
    <property type="match status" value="1"/>
</dbReference>
<dbReference type="SUPFAM" id="SSF51283">
    <property type="entry name" value="dUTPase-like"/>
    <property type="match status" value="1"/>
</dbReference>
<keyword id="KW-0378">Hydrolase</keyword>
<keyword id="KW-0460">Magnesium</keyword>
<keyword id="KW-0479">Metal-binding</keyword>
<keyword id="KW-0546">Nucleotide metabolism</keyword>
<keyword id="KW-1185">Reference proteome</keyword>
<organism>
    <name type="scientific">Tolumonas auensis (strain DSM 9187 / NBRC 110442 / TA 4)</name>
    <dbReference type="NCBI Taxonomy" id="595494"/>
    <lineage>
        <taxon>Bacteria</taxon>
        <taxon>Pseudomonadati</taxon>
        <taxon>Pseudomonadota</taxon>
        <taxon>Gammaproteobacteria</taxon>
        <taxon>Aeromonadales</taxon>
        <taxon>Aeromonadaceae</taxon>
        <taxon>Tolumonas</taxon>
    </lineage>
</organism>
<protein>
    <recommendedName>
        <fullName evidence="1">Deoxyuridine 5'-triphosphate nucleotidohydrolase</fullName>
        <shortName evidence="1">dUTPase</shortName>
        <ecNumber evidence="1">3.6.1.23</ecNumber>
    </recommendedName>
    <alternativeName>
        <fullName evidence="1">dUTP pyrophosphatase</fullName>
    </alternativeName>
</protein>
<proteinExistence type="inferred from homology"/>
<gene>
    <name evidence="1" type="primary">dut</name>
    <name type="ordered locus">Tola_0185</name>
</gene>
<evidence type="ECO:0000255" key="1">
    <source>
        <dbReference type="HAMAP-Rule" id="MF_00116"/>
    </source>
</evidence>
<sequence length="151" mass="16036">MKQIELKILDARIGNEFPLPEYATPGSAGLDLRACLDAAVVLAPGETQLIPTGLAIHIADPGLCATILPRSGLGHKHGIVLGNLVGLIDSDYQGQLMVSVWNRGNTTFTIQPGERIAQLVFMPVVQASFNIVDDFDTSERGEGGFGSSGRH</sequence>